<dbReference type="EC" id="2.4.99.17" evidence="1"/>
<dbReference type="EMBL" id="AJ749949">
    <property type="protein sequence ID" value="CAG45848.1"/>
    <property type="molecule type" value="Genomic_DNA"/>
</dbReference>
<dbReference type="RefSeq" id="YP_170173.1">
    <property type="nucleotide sequence ID" value="NC_006570.2"/>
</dbReference>
<dbReference type="SMR" id="Q5NFL9"/>
<dbReference type="STRING" id="177416.FTT_1215c"/>
<dbReference type="DNASU" id="3191648"/>
<dbReference type="EnsemblBacteria" id="CAG45848">
    <property type="protein sequence ID" value="CAG45848"/>
    <property type="gene ID" value="FTT_1215c"/>
</dbReference>
<dbReference type="KEGG" id="ftu:FTT_1215c"/>
<dbReference type="eggNOG" id="COG0809">
    <property type="taxonomic scope" value="Bacteria"/>
</dbReference>
<dbReference type="OrthoDB" id="9805933at2"/>
<dbReference type="UniPathway" id="UPA00392"/>
<dbReference type="Proteomes" id="UP000001174">
    <property type="component" value="Chromosome"/>
</dbReference>
<dbReference type="GO" id="GO:0005737">
    <property type="term" value="C:cytoplasm"/>
    <property type="evidence" value="ECO:0007669"/>
    <property type="project" value="UniProtKB-SubCell"/>
</dbReference>
<dbReference type="GO" id="GO:0051075">
    <property type="term" value="F:S-adenosylmethionine:tRNA ribosyltransferase-isomerase activity"/>
    <property type="evidence" value="ECO:0007669"/>
    <property type="project" value="UniProtKB-EC"/>
</dbReference>
<dbReference type="GO" id="GO:0008616">
    <property type="term" value="P:queuosine biosynthetic process"/>
    <property type="evidence" value="ECO:0007669"/>
    <property type="project" value="UniProtKB-UniRule"/>
</dbReference>
<dbReference type="GO" id="GO:0002099">
    <property type="term" value="P:tRNA wobble guanine modification"/>
    <property type="evidence" value="ECO:0007669"/>
    <property type="project" value="TreeGrafter"/>
</dbReference>
<dbReference type="FunFam" id="3.40.1780.10:FF:000001">
    <property type="entry name" value="S-adenosylmethionine:tRNA ribosyltransferase-isomerase"/>
    <property type="match status" value="1"/>
</dbReference>
<dbReference type="Gene3D" id="2.40.10.240">
    <property type="entry name" value="QueA-like"/>
    <property type="match status" value="1"/>
</dbReference>
<dbReference type="Gene3D" id="3.40.1780.10">
    <property type="entry name" value="QueA-like"/>
    <property type="match status" value="1"/>
</dbReference>
<dbReference type="HAMAP" id="MF_00113">
    <property type="entry name" value="QueA"/>
    <property type="match status" value="1"/>
</dbReference>
<dbReference type="InterPro" id="IPR003699">
    <property type="entry name" value="QueA"/>
</dbReference>
<dbReference type="InterPro" id="IPR042118">
    <property type="entry name" value="QueA_dom1"/>
</dbReference>
<dbReference type="InterPro" id="IPR042119">
    <property type="entry name" value="QueA_dom2"/>
</dbReference>
<dbReference type="InterPro" id="IPR036100">
    <property type="entry name" value="QueA_sf"/>
</dbReference>
<dbReference type="NCBIfam" id="NF001140">
    <property type="entry name" value="PRK00147.1"/>
    <property type="match status" value="1"/>
</dbReference>
<dbReference type="NCBIfam" id="TIGR00113">
    <property type="entry name" value="queA"/>
    <property type="match status" value="1"/>
</dbReference>
<dbReference type="PANTHER" id="PTHR30307">
    <property type="entry name" value="S-ADENOSYLMETHIONINE:TRNA RIBOSYLTRANSFERASE-ISOMERASE"/>
    <property type="match status" value="1"/>
</dbReference>
<dbReference type="PANTHER" id="PTHR30307:SF0">
    <property type="entry name" value="S-ADENOSYLMETHIONINE:TRNA RIBOSYLTRANSFERASE-ISOMERASE"/>
    <property type="match status" value="1"/>
</dbReference>
<dbReference type="Pfam" id="PF02547">
    <property type="entry name" value="Queuosine_synth"/>
    <property type="match status" value="1"/>
</dbReference>
<dbReference type="SUPFAM" id="SSF111337">
    <property type="entry name" value="QueA-like"/>
    <property type="match status" value="1"/>
</dbReference>
<name>QUEA_FRATT</name>
<accession>Q5NFL9</accession>
<organism>
    <name type="scientific">Francisella tularensis subsp. tularensis (strain SCHU S4 / Schu 4)</name>
    <dbReference type="NCBI Taxonomy" id="177416"/>
    <lineage>
        <taxon>Bacteria</taxon>
        <taxon>Pseudomonadati</taxon>
        <taxon>Pseudomonadota</taxon>
        <taxon>Gammaproteobacteria</taxon>
        <taxon>Thiotrichales</taxon>
        <taxon>Francisellaceae</taxon>
        <taxon>Francisella</taxon>
    </lineage>
</organism>
<keyword id="KW-0963">Cytoplasm</keyword>
<keyword id="KW-0671">Queuosine biosynthesis</keyword>
<keyword id="KW-1185">Reference proteome</keyword>
<keyword id="KW-0949">S-adenosyl-L-methionine</keyword>
<keyword id="KW-0808">Transferase</keyword>
<evidence type="ECO:0000255" key="1">
    <source>
        <dbReference type="HAMAP-Rule" id="MF_00113"/>
    </source>
</evidence>
<protein>
    <recommendedName>
        <fullName evidence="1">S-adenosylmethionine:tRNA ribosyltransferase-isomerase</fullName>
        <ecNumber evidence="1">2.4.99.17</ecNumber>
    </recommendedName>
    <alternativeName>
        <fullName evidence="1">Queuosine biosynthesis protein QueA</fullName>
    </alternativeName>
</protein>
<proteinExistence type="inferred from homology"/>
<gene>
    <name evidence="1" type="primary">queA</name>
    <name type="ordered locus">FTT_1215c</name>
</gene>
<comment type="function">
    <text evidence="1">Transfers and isomerizes the ribose moiety from AdoMet to the 7-aminomethyl group of 7-deazaguanine (preQ1-tRNA) to give epoxyqueuosine (oQ-tRNA).</text>
</comment>
<comment type="catalytic activity">
    <reaction evidence="1">
        <text>7-aminomethyl-7-carbaguanosine(34) in tRNA + S-adenosyl-L-methionine = epoxyqueuosine(34) in tRNA + adenine + L-methionine + 2 H(+)</text>
        <dbReference type="Rhea" id="RHEA:32155"/>
        <dbReference type="Rhea" id="RHEA-COMP:10342"/>
        <dbReference type="Rhea" id="RHEA-COMP:18582"/>
        <dbReference type="ChEBI" id="CHEBI:15378"/>
        <dbReference type="ChEBI" id="CHEBI:16708"/>
        <dbReference type="ChEBI" id="CHEBI:57844"/>
        <dbReference type="ChEBI" id="CHEBI:59789"/>
        <dbReference type="ChEBI" id="CHEBI:82833"/>
        <dbReference type="ChEBI" id="CHEBI:194443"/>
        <dbReference type="EC" id="2.4.99.17"/>
    </reaction>
</comment>
<comment type="pathway">
    <text evidence="1">tRNA modification; tRNA-queuosine biosynthesis.</text>
</comment>
<comment type="subunit">
    <text evidence="1">Monomer.</text>
</comment>
<comment type="subcellular location">
    <subcellularLocation>
        <location evidence="1">Cytoplasm</location>
    </subcellularLocation>
</comment>
<comment type="similarity">
    <text evidence="1">Belongs to the QueA family.</text>
</comment>
<reference key="1">
    <citation type="journal article" date="2005" name="Nat. Genet.">
        <title>The complete genome sequence of Francisella tularensis, the causative agent of tularemia.</title>
        <authorList>
            <person name="Larsson P."/>
            <person name="Oyston P.C.F."/>
            <person name="Chain P."/>
            <person name="Chu M.C."/>
            <person name="Duffield M."/>
            <person name="Fuxelius H.-H."/>
            <person name="Garcia E."/>
            <person name="Haelltorp G."/>
            <person name="Johansson D."/>
            <person name="Isherwood K.E."/>
            <person name="Karp P.D."/>
            <person name="Larsson E."/>
            <person name="Liu Y."/>
            <person name="Michell S."/>
            <person name="Prior J."/>
            <person name="Prior R."/>
            <person name="Malfatti S."/>
            <person name="Sjoestedt A."/>
            <person name="Svensson K."/>
            <person name="Thompson N."/>
            <person name="Vergez L."/>
            <person name="Wagg J.K."/>
            <person name="Wren B.W."/>
            <person name="Lindler L.E."/>
            <person name="Andersson S.G.E."/>
            <person name="Forsman M."/>
            <person name="Titball R.W."/>
        </authorList>
    </citation>
    <scope>NUCLEOTIDE SEQUENCE [LARGE SCALE GENOMIC DNA]</scope>
    <source>
        <strain>SCHU S4 / Schu 4</strain>
    </source>
</reference>
<feature type="chain" id="PRO_0000231337" description="S-adenosylmethionine:tRNA ribosyltransferase-isomerase">
    <location>
        <begin position="1"/>
        <end position="340"/>
    </location>
</feature>
<sequence length="340" mass="38577">MFMKTDDFDYKLPEELIASYPLENRDASRLLKLNKQTGEIADYKFTDFIDFINPGDLLVFNNSKVMLARLYGSKTTGAKLEYLIERIKTPKLFETHIKANRSPAIGSEIYVEDTLAKVLDKDGGMYLLEIQGDKDIYQLMEEFGHIPLPPYMKRDDEEFDAERYQTVYAQDLGSVAAPTAGLHFSKELMQQIKDKGVDIAYITLHVGSGTFKPVQVDDVESHKMHAEVISVPVEVCQKIRQTKENGGRVIAIGTTSVRSLETAGQNGQIEPYQGETDIFLYPGKKFNVVDAMITNFHLPKSTLIMLVSAFADKEKIIKAYEHAIAERYRFFSYGDAMFIF</sequence>